<name>CFGA_TACTR</name>
<accession>Q27082</accession>
<sequence>MLVLLCCVVLHVGVARICCSHEPKWQLVWSDEFTNGISSDWEFEMGNGLNGWGNNELQYYRRENAQVEGGKLVITAKREDYDGFKYTSARLKTQFDKSWKYGKIEAKMAIPSFRGVWVMFWMSGDNTNYVRWPSSGEIDFIEHRNTNNEKVRGTIHWSTPDGAHAHHNRESNTNGIDYHIYSVEWNSSIVKWFVNGNQYFEVKIQGGVNGKSAFRNKVFVILNMAIGGNWPGFDVADEAFPAKMYIDYVRVYQDASTSSPVGDTSLDGYYFVQNRHSELYLDVTDASNEDGAFLQQWSYSGNENQQFDFEHLENNVYKITNKKSGKSLDVYNFGTENGVRIQQWSYGGARNQQFTVQSVGDGYYKIIPRGSGKLVEVADFSKDAGGKIQQWSDNNQLSGQWKLIKSKSYSKLIQAESYFDSSKVQLEDTSDVGGGKNVKCDNEGAWMAYKDIDFPSSGNYRIEYRVASERAGGKLSLDLNAGSIVLGMLDVPSTGGWQKWTTISHTVNVDSGTYNLGIYVQRASWNINWIKITKIPEQSNLNQGRRNSKLIQAESYFSYSEVQLEDTLDVGGGKNVKCDKEGAWMAYKDIDFPSSGSYRVEYRVASERAGGKLSLDLNAGSIVLGMLDIPSTGGLQKWTTISHIVNVDLGTYNLGIYVQKASWNINWIRITKV</sequence>
<keyword id="KW-0903">Direct protein sequencing</keyword>
<keyword id="KW-0325">Glycoprotein</keyword>
<keyword id="KW-0326">Glycosidase</keyword>
<keyword id="KW-0353">Hemolymph clotting</keyword>
<keyword id="KW-0378">Hydrolase</keyword>
<keyword id="KW-0430">Lectin</keyword>
<keyword id="KW-0677">Repeat</keyword>
<keyword id="KW-0732">Signal</keyword>
<reference evidence="12" key="1">
    <citation type="journal article" date="1994" name="J. Biol. Chem.">
        <title>Horseshoe crab (1,3)-beta-D-glucan-sensitive coagulation factor G. A serine protease zymogen heterodimer with similarities to beta-glucan-binding proteins.</title>
        <authorList>
            <person name="Seki N."/>
            <person name="Muta T."/>
            <person name="Oda T."/>
            <person name="Iwaki D."/>
            <person name="Kuma K."/>
            <person name="Miyata T."/>
            <person name="Iwanaga S."/>
        </authorList>
    </citation>
    <scope>NUCLEOTIDE SEQUENCE [MRNA]</scope>
    <scope>PROTEIN SEQUENCE OF 20-28; 78-103; 108-133; 212-236; 366-373; 424-436; 440-467; 412-427 AND 581-588</scope>
    <scope>TISSUE SPECIFICITY</scope>
</reference>
<reference evidence="9" key="2">
    <citation type="journal article" date="1995" name="J. Biol. Chem.">
        <title>Purified horseshoe crab factor G. Reconstitution and characterization of the (1--&gt;3)-beta-D-glucan-sensitive serine protease cascade.</title>
        <authorList>
            <person name="Muta T."/>
            <person name="Seki N."/>
            <person name="Takaki Y."/>
            <person name="Hashimoto R."/>
            <person name="Oda T."/>
            <person name="Iwanaga A."/>
            <person name="Tokunaga F."/>
            <person name="Iwanaga S."/>
        </authorList>
    </citation>
    <scope>FUNCTION</scope>
    <scope>SUBUNIT</scope>
    <scope>TISSUE SPECIFICITY</scope>
    <scope>BIOTECHNOLOGY</scope>
    <scope>PROTEOLYTIC CLEAVAGE</scope>
</reference>
<dbReference type="EC" id="3.2.1.-" evidence="9"/>
<dbReference type="EMBL" id="D16622">
    <property type="protein sequence ID" value="BAA04044.1"/>
    <property type="molecule type" value="mRNA"/>
</dbReference>
<dbReference type="PIR" id="A49878">
    <property type="entry name" value="A49878"/>
</dbReference>
<dbReference type="SMR" id="Q27082"/>
<dbReference type="CAZy" id="CBM13">
    <property type="family name" value="Carbohydrate-Binding Module Family 13"/>
</dbReference>
<dbReference type="CAZy" id="CBM6">
    <property type="family name" value="Carbohydrate-Binding Module Family 6"/>
</dbReference>
<dbReference type="CAZy" id="GH16">
    <property type="family name" value="Glycoside Hydrolase Family 16"/>
</dbReference>
<dbReference type="MEROPS" id="X14.001"/>
<dbReference type="GO" id="GO:1905370">
    <property type="term" value="C:serine-type endopeptidase complex"/>
    <property type="evidence" value="ECO:0000314"/>
    <property type="project" value="UniProtKB"/>
</dbReference>
<dbReference type="GO" id="GO:0030246">
    <property type="term" value="F:carbohydrate binding"/>
    <property type="evidence" value="ECO:0007669"/>
    <property type="project" value="UniProtKB-KW"/>
</dbReference>
<dbReference type="GO" id="GO:0004553">
    <property type="term" value="F:hydrolase activity, hydrolyzing O-glycosyl compounds"/>
    <property type="evidence" value="ECO:0007669"/>
    <property type="project" value="InterPro"/>
</dbReference>
<dbReference type="GO" id="GO:0005975">
    <property type="term" value="P:carbohydrate metabolic process"/>
    <property type="evidence" value="ECO:0007669"/>
    <property type="project" value="InterPro"/>
</dbReference>
<dbReference type="GO" id="GO:0042381">
    <property type="term" value="P:hemolymph coagulation"/>
    <property type="evidence" value="ECO:0000314"/>
    <property type="project" value="UniProtKB"/>
</dbReference>
<dbReference type="CDD" id="cd00161">
    <property type="entry name" value="beta-trefoil_Ricin-like"/>
    <property type="match status" value="1"/>
</dbReference>
<dbReference type="CDD" id="cd04080">
    <property type="entry name" value="CBM6_cellulase-like"/>
    <property type="match status" value="2"/>
</dbReference>
<dbReference type="CDD" id="cd08023">
    <property type="entry name" value="GH16_laminarinase_like"/>
    <property type="match status" value="1"/>
</dbReference>
<dbReference type="Gene3D" id="2.60.120.200">
    <property type="match status" value="1"/>
</dbReference>
<dbReference type="Gene3D" id="2.80.10.50">
    <property type="match status" value="3"/>
</dbReference>
<dbReference type="Gene3D" id="2.60.120.260">
    <property type="entry name" value="Galactose-binding domain-like"/>
    <property type="match status" value="2"/>
</dbReference>
<dbReference type="InterPro" id="IPR005084">
    <property type="entry name" value="CBM6"/>
</dbReference>
<dbReference type="InterPro" id="IPR006584">
    <property type="entry name" value="Cellulose-bd_IV"/>
</dbReference>
<dbReference type="InterPro" id="IPR013320">
    <property type="entry name" value="ConA-like_dom_sf"/>
</dbReference>
<dbReference type="InterPro" id="IPR008979">
    <property type="entry name" value="Galactose-bd-like_sf"/>
</dbReference>
<dbReference type="InterPro" id="IPR000757">
    <property type="entry name" value="GH16"/>
</dbReference>
<dbReference type="InterPro" id="IPR050546">
    <property type="entry name" value="Glycosyl_Hydrlase_16"/>
</dbReference>
<dbReference type="InterPro" id="IPR035992">
    <property type="entry name" value="Ricin_B-like_lectins"/>
</dbReference>
<dbReference type="InterPro" id="IPR000772">
    <property type="entry name" value="Ricin_B_lectin"/>
</dbReference>
<dbReference type="PANTHER" id="PTHR10963:SF55">
    <property type="entry name" value="GLYCOSIDE HYDROLASE FAMILY 16 PROTEIN"/>
    <property type="match status" value="1"/>
</dbReference>
<dbReference type="PANTHER" id="PTHR10963">
    <property type="entry name" value="GLYCOSYL HYDROLASE-RELATED"/>
    <property type="match status" value="1"/>
</dbReference>
<dbReference type="Pfam" id="PF03422">
    <property type="entry name" value="CBM_6"/>
    <property type="match status" value="2"/>
</dbReference>
<dbReference type="Pfam" id="PF00722">
    <property type="entry name" value="Glyco_hydro_16"/>
    <property type="match status" value="1"/>
</dbReference>
<dbReference type="Pfam" id="PF14200">
    <property type="entry name" value="RicinB_lectin_2"/>
    <property type="match status" value="2"/>
</dbReference>
<dbReference type="SMART" id="SM00606">
    <property type="entry name" value="CBD_IV"/>
    <property type="match status" value="2"/>
</dbReference>
<dbReference type="SMART" id="SM00458">
    <property type="entry name" value="RICIN"/>
    <property type="match status" value="1"/>
</dbReference>
<dbReference type="SUPFAM" id="SSF49899">
    <property type="entry name" value="Concanavalin A-like lectins/glucanases"/>
    <property type="match status" value="1"/>
</dbReference>
<dbReference type="SUPFAM" id="SSF49785">
    <property type="entry name" value="Galactose-binding domain-like"/>
    <property type="match status" value="2"/>
</dbReference>
<dbReference type="SUPFAM" id="SSF50370">
    <property type="entry name" value="Ricin B-like lectins"/>
    <property type="match status" value="1"/>
</dbReference>
<dbReference type="PROSITE" id="PS51175">
    <property type="entry name" value="CBM6"/>
    <property type="match status" value="2"/>
</dbReference>
<dbReference type="PROSITE" id="PS51762">
    <property type="entry name" value="GH16_2"/>
    <property type="match status" value="1"/>
</dbReference>
<dbReference type="PROSITE" id="PS50231">
    <property type="entry name" value="RICIN_B_LECTIN"/>
    <property type="match status" value="1"/>
</dbReference>
<protein>
    <recommendedName>
        <fullName evidence="8">Clotting factor G alpha subunit</fullName>
        <ecNumber evidence="9">3.2.1.-</ecNumber>
    </recommendedName>
</protein>
<comment type="function">
    <text evidence="6 10">Component of the heterodimer clotting factor G which may play a role in defense mechanisms against fungi (Probable). Initiates a (1-&gt;3)-beta-glucan-sensing clotting pathway whereby the alpha subunit binds to glucans containing (1-&gt;3)-beta linkages, which are components of the fungal cell wall, and the beta subunit catalyzes the activation of proclotting enzyme (PubMed:7822328).</text>
</comment>
<comment type="subunit">
    <text evidence="6">Clotting factor G is a heterodimer composed of two non-covalently associated subunits, alpha and beta.</text>
</comment>
<comment type="tissue specificity">
    <text evidence="6 7">Expressed in hemocytes (at protein level).</text>
</comment>
<comment type="PTM">
    <text evidence="6">In presence of (1-&gt;3)-beta-glucan, proteolytically cleaved into a 55kDa and a 17kDa forms.</text>
</comment>
<comment type="biotechnology">
    <text evidence="10">Clotting factor G is a component of the Limulus test used to detect bacterial endotoxins in fluids.</text>
</comment>
<comment type="similarity">
    <text evidence="5">Belongs to the glycosyl hydrolase 16 family.</text>
</comment>
<proteinExistence type="evidence at protein level"/>
<organism evidence="12">
    <name type="scientific">Tachypleus tridentatus</name>
    <name type="common">Japanese horseshoe crab</name>
    <dbReference type="NCBI Taxonomy" id="6853"/>
    <lineage>
        <taxon>Eukaryota</taxon>
        <taxon>Metazoa</taxon>
        <taxon>Ecdysozoa</taxon>
        <taxon>Arthropoda</taxon>
        <taxon>Chelicerata</taxon>
        <taxon>Merostomata</taxon>
        <taxon>Xiphosura</taxon>
        <taxon>Limulidae</taxon>
        <taxon>Tachypleus</taxon>
    </lineage>
</organism>
<evidence type="ECO:0000255" key="1"/>
<evidence type="ECO:0000255" key="2">
    <source>
        <dbReference type="PROSITE-ProRule" id="PRU00174"/>
    </source>
</evidence>
<evidence type="ECO:0000255" key="3">
    <source>
        <dbReference type="PROSITE-ProRule" id="PRU00498"/>
    </source>
</evidence>
<evidence type="ECO:0000255" key="4">
    <source>
        <dbReference type="PROSITE-ProRule" id="PRU00523"/>
    </source>
</evidence>
<evidence type="ECO:0000255" key="5">
    <source>
        <dbReference type="PROSITE-ProRule" id="PRU01098"/>
    </source>
</evidence>
<evidence type="ECO:0000269" key="6">
    <source>
    </source>
</evidence>
<evidence type="ECO:0000269" key="7">
    <source>
    </source>
</evidence>
<evidence type="ECO:0000303" key="8">
    <source>
    </source>
</evidence>
<evidence type="ECO:0000305" key="9"/>
<evidence type="ECO:0000305" key="10">
    <source>
    </source>
</evidence>
<evidence type="ECO:0000305" key="11">
    <source>
    </source>
</evidence>
<evidence type="ECO:0000312" key="12">
    <source>
        <dbReference type="EMBL" id="BAA04044.1"/>
    </source>
</evidence>
<feature type="signal peptide" evidence="7">
    <location>
        <begin position="1"/>
        <end position="19"/>
    </location>
</feature>
<feature type="chain" id="PRO_5013107839" description="Clotting factor G alpha subunit" evidence="1">
    <location>
        <begin position="20"/>
        <end position="673"/>
    </location>
</feature>
<feature type="domain" description="GH16" evidence="5">
    <location>
        <begin position="27"/>
        <end position="257"/>
    </location>
</feature>
<feature type="domain" description="Ricin B-type lectin" evidence="2">
    <location>
        <begin position="266"/>
        <end position="404"/>
    </location>
</feature>
<feature type="domain" description="CBM6 1" evidence="4">
    <location>
        <begin position="411"/>
        <end position="533"/>
    </location>
</feature>
<feature type="domain" description="CBM6 2" evidence="4">
    <location>
        <begin position="549"/>
        <end position="671"/>
    </location>
</feature>
<feature type="active site" description="Nucleophile" evidence="5">
    <location>
        <position position="137"/>
    </location>
</feature>
<feature type="active site" description="Proton donor" evidence="5">
    <location>
        <position position="142"/>
    </location>
</feature>
<feature type="site" description="Cleavage" evidence="11">
    <location>
        <begin position="169"/>
        <end position="170"/>
    </location>
</feature>
<feature type="glycosylation site" description="N-linked (GlcNAc...) asparagine" evidence="3">
    <location>
        <position position="186"/>
    </location>
</feature>